<accession>Q82IY3</accession>
<sequence>MSQHTFVAGTAPGAVPVVGHAWQMMRRPLHFMSSLSAHGDLVKIRIGPTSAYVPCHPELLRQVLTNDRVFDKGGVFYDRARDIAGNGLVTCPYRDHRRQRRLMQSAFQRTQLERYSTAMRAEIDATAARWHDGTVIDAFPELYGMALRTVARTLYSTPVTEELAQRVEQAFDTVLNGLFRQMFLPHSLRRLPTPANLRYRNNLRFLHDTVQDLITEYRRDDTQRDDLLSALLASRDEDGGRLGDTEIHDQVITVMAAGTETVAGTLTWIFHLLSRHPEIEARLYEEIDTVLDGKPPHWDDLPSLSLTDRIITEALRMYPPAWIFTRLTASDVDLAGVRLPEGTTIVFSPSSVQRHSEAYDDASRFDPDRWLPDRTSAVARQAFTAFGTGARKCIGDLFARTEATLALATMLSQWRVTVEPDADVRPVALATVYHPRRLRLRLTARTPGQ</sequence>
<comment type="function">
    <text evidence="3">Catalyzes the conversion of pentalenene to pentalen-13-al by stepwise oxidation via pentalen-13-ol, a precursor of neopentalenolactone antibiotic.</text>
</comment>
<comment type="catalytic activity">
    <reaction evidence="3">
        <text>pentalenene + 4 reduced [2Fe-2S]-[ferredoxin] + 2 O2 + 4 H(+) = pentalen-13-al + 4 oxidized [2Fe-2S]-[ferredoxin] + 3 H2O</text>
        <dbReference type="Rhea" id="RHEA:31699"/>
        <dbReference type="Rhea" id="RHEA-COMP:10000"/>
        <dbReference type="Rhea" id="RHEA-COMP:10001"/>
        <dbReference type="ChEBI" id="CHEBI:15377"/>
        <dbReference type="ChEBI" id="CHEBI:15378"/>
        <dbReference type="ChEBI" id="CHEBI:15379"/>
        <dbReference type="ChEBI" id="CHEBI:17251"/>
        <dbReference type="ChEBI" id="CHEBI:33737"/>
        <dbReference type="ChEBI" id="CHEBI:33738"/>
        <dbReference type="ChEBI" id="CHEBI:63244"/>
        <dbReference type="EC" id="1.14.15.32"/>
    </reaction>
</comment>
<comment type="biophysicochemical properties">
    <kinetics>
        <KM evidence="3">0.62 uM for active enantiomer of pentalenene</KM>
        <text>kcat is 0.503 min(-1) with active enantiomer of pentalenene as substrate.</text>
    </kinetics>
    <phDependence>
        <text evidence="3">Optimum pH is 8.0.</text>
    </phDependence>
</comment>
<comment type="pathway">
    <text evidence="3 4">Antibiotic biosynthesis; neopentalenolactone biosynthesis.</text>
</comment>
<comment type="subcellular location">
    <subcellularLocation>
        <location evidence="5">Membrane</location>
        <topology evidence="5">Single-pass membrane protein</topology>
    </subcellularLocation>
</comment>
<comment type="miscellaneous">
    <text evidence="6">S.avermitilis does not produce pentalenolactone itself in vivo but instead a group of new metabolites that are neopentalenolactone derivatives.</text>
</comment>
<comment type="similarity">
    <text evidence="5">Belongs to the cytochrome P450 family.</text>
</comment>
<protein>
    <recommendedName>
        <fullName>Pentalenene oxygenase</fullName>
        <ecNumber evidence="3">1.14.15.32</ecNumber>
    </recommendedName>
</protein>
<feature type="chain" id="PRO_0000418751" description="Pentalenene oxygenase">
    <location>
        <begin position="1"/>
        <end position="449"/>
    </location>
</feature>
<feature type="transmembrane region" description="Helical" evidence="2">
    <location>
        <begin position="251"/>
        <end position="273"/>
    </location>
</feature>
<feature type="binding site" description="axial binding residue" evidence="1">
    <location>
        <position position="393"/>
    </location>
    <ligand>
        <name>heme</name>
        <dbReference type="ChEBI" id="CHEBI:30413"/>
    </ligand>
    <ligandPart>
        <name>Fe</name>
        <dbReference type="ChEBI" id="CHEBI:18248"/>
    </ligandPart>
</feature>
<organism>
    <name type="scientific">Streptomyces avermitilis (strain ATCC 31267 / DSM 46492 / JCM 5070 / NBRC 14893 / NCIMB 12804 / NRRL 8165 / MA-4680)</name>
    <dbReference type="NCBI Taxonomy" id="227882"/>
    <lineage>
        <taxon>Bacteria</taxon>
        <taxon>Bacillati</taxon>
        <taxon>Actinomycetota</taxon>
        <taxon>Actinomycetes</taxon>
        <taxon>Kitasatosporales</taxon>
        <taxon>Streptomycetaceae</taxon>
        <taxon>Streptomyces</taxon>
    </lineage>
</organism>
<gene>
    <name type="primary">ptlI</name>
    <name type="ordered locus">SAV_2999</name>
</gene>
<keyword id="KW-0045">Antibiotic biosynthesis</keyword>
<keyword id="KW-0349">Heme</keyword>
<keyword id="KW-0408">Iron</keyword>
<keyword id="KW-0472">Membrane</keyword>
<keyword id="KW-0479">Metal-binding</keyword>
<keyword id="KW-0503">Monooxygenase</keyword>
<keyword id="KW-0560">Oxidoreductase</keyword>
<keyword id="KW-1185">Reference proteome</keyword>
<keyword id="KW-0812">Transmembrane</keyword>
<keyword id="KW-1133">Transmembrane helix</keyword>
<name>PTLI_STRAW</name>
<proteinExistence type="evidence at protein level"/>
<reference key="1">
    <citation type="journal article" date="2001" name="Proc. Natl. Acad. Sci. U.S.A.">
        <title>Genome sequence of an industrial microorganism Streptomyces avermitilis: deducing the ability of producing secondary metabolites.</title>
        <authorList>
            <person name="Omura S."/>
            <person name="Ikeda H."/>
            <person name="Ishikawa J."/>
            <person name="Hanamoto A."/>
            <person name="Takahashi C."/>
            <person name="Shinose M."/>
            <person name="Takahashi Y."/>
            <person name="Horikawa H."/>
            <person name="Nakazawa H."/>
            <person name="Osonoe T."/>
            <person name="Kikuchi H."/>
            <person name="Shiba T."/>
            <person name="Sakaki Y."/>
            <person name="Hattori M."/>
        </authorList>
    </citation>
    <scope>NUCLEOTIDE SEQUENCE [LARGE SCALE GENOMIC DNA]</scope>
    <source>
        <strain>ATCC 31267 / DSM 46492 / JCM 5070 / NBRC 14893 / NCIMB 12804 / NRRL 8165 / MA-4680</strain>
    </source>
</reference>
<reference key="2">
    <citation type="journal article" date="2003" name="Nat. Biotechnol.">
        <title>Complete genome sequence and comparative analysis of the industrial microorganism Streptomyces avermitilis.</title>
        <authorList>
            <person name="Ikeda H."/>
            <person name="Ishikawa J."/>
            <person name="Hanamoto A."/>
            <person name="Shinose M."/>
            <person name="Kikuchi H."/>
            <person name="Shiba T."/>
            <person name="Sakaki Y."/>
            <person name="Hattori M."/>
            <person name="Omura S."/>
        </authorList>
    </citation>
    <scope>NUCLEOTIDE SEQUENCE [LARGE SCALE GENOMIC DNA]</scope>
    <source>
        <strain>ATCC 31267 / DSM 46492 / JCM 5070 / NBRC 14893 / NCIMB 12804 / NRRL 8165 / MA-4680</strain>
    </source>
</reference>
<reference key="3">
    <citation type="journal article" date="2006" name="J. Am. Chem. Soc.">
        <title>Pentalenolactone biosynthesis. Molecular cloning and assignment of biochemical function to PtlI, a cytochrome P450 of Streptomyces avermitilis.</title>
        <authorList>
            <person name="Quaderer R."/>
            <person name="Omura S."/>
            <person name="Ikeda H."/>
            <person name="Cane D.E."/>
        </authorList>
    </citation>
    <scope>FUNCTION</scope>
    <scope>CATALYTIC ACTIVITY</scope>
    <scope>PATHWAY</scope>
    <scope>BIOPHYSICOCHEMICAL PROPERTIES</scope>
    <source>
        <strain>ATCC 31267 / DSM 46492 / JCM 5070 / NBRC 14893 / NCIMB 12804 / NRRL 8165 / MA-4680</strain>
    </source>
</reference>
<reference key="4">
    <citation type="journal article" date="2011" name="Biochemistry">
        <title>Genome mining in Streptomyces. Elucidation of the role of Baeyer-Villiger monooxygenases and non-heme iron-dependent dehydrogenase/oxygenases in the final steps of the biosynthesis of pentalenolactone and neopentalenolactone.</title>
        <authorList>
            <person name="Seo M.J."/>
            <person name="Zhu D."/>
            <person name="Endo S."/>
            <person name="Ikeda H."/>
            <person name="Cane D.E."/>
        </authorList>
    </citation>
    <scope>PATHWAY</scope>
    <source>
        <strain>ATCC 31267 / DSM 46492 / JCM 5070 / NBRC 14893 / NCIMB 12804 / NRRL 8165 / MA-4680</strain>
    </source>
</reference>
<dbReference type="EC" id="1.14.15.32" evidence="3"/>
<dbReference type="EMBL" id="BA000030">
    <property type="protein sequence ID" value="BAC70710.1"/>
    <property type="molecule type" value="Genomic_DNA"/>
</dbReference>
<dbReference type="RefSeq" id="WP_010984430.1">
    <property type="nucleotide sequence ID" value="NZ_JZJK01000090.1"/>
</dbReference>
<dbReference type="SMR" id="Q82IY3"/>
<dbReference type="GeneID" id="41540080"/>
<dbReference type="KEGG" id="sma:SAVERM_2999"/>
<dbReference type="eggNOG" id="COG2124">
    <property type="taxonomic scope" value="Bacteria"/>
</dbReference>
<dbReference type="HOGENOM" id="CLU_001570_5_1_11"/>
<dbReference type="OrthoDB" id="4746309at2"/>
<dbReference type="BioCyc" id="MetaCyc:MONOMER-16833"/>
<dbReference type="UniPathway" id="UPA01021"/>
<dbReference type="Proteomes" id="UP000000428">
    <property type="component" value="Chromosome"/>
</dbReference>
<dbReference type="GO" id="GO:0016020">
    <property type="term" value="C:membrane"/>
    <property type="evidence" value="ECO:0007669"/>
    <property type="project" value="UniProtKB-SubCell"/>
</dbReference>
<dbReference type="GO" id="GO:0020037">
    <property type="term" value="F:heme binding"/>
    <property type="evidence" value="ECO:0007669"/>
    <property type="project" value="InterPro"/>
</dbReference>
<dbReference type="GO" id="GO:0005506">
    <property type="term" value="F:iron ion binding"/>
    <property type="evidence" value="ECO:0007669"/>
    <property type="project" value="InterPro"/>
</dbReference>
<dbReference type="GO" id="GO:0004497">
    <property type="term" value="F:monooxygenase activity"/>
    <property type="evidence" value="ECO:0007669"/>
    <property type="project" value="UniProtKB-KW"/>
</dbReference>
<dbReference type="GO" id="GO:0016705">
    <property type="term" value="F:oxidoreductase activity, acting on paired donors, with incorporation or reduction of molecular oxygen"/>
    <property type="evidence" value="ECO:0007669"/>
    <property type="project" value="InterPro"/>
</dbReference>
<dbReference type="GO" id="GO:0050467">
    <property type="term" value="F:pentalenene synthase activity"/>
    <property type="evidence" value="ECO:0000314"/>
    <property type="project" value="UniProtKB"/>
</dbReference>
<dbReference type="GO" id="GO:0017000">
    <property type="term" value="P:antibiotic biosynthetic process"/>
    <property type="evidence" value="ECO:0000314"/>
    <property type="project" value="UniProtKB"/>
</dbReference>
<dbReference type="CDD" id="cd11049">
    <property type="entry name" value="CYP170A1-like"/>
    <property type="match status" value="1"/>
</dbReference>
<dbReference type="Gene3D" id="1.10.630.10">
    <property type="entry name" value="Cytochrome P450"/>
    <property type="match status" value="1"/>
</dbReference>
<dbReference type="InterPro" id="IPR001128">
    <property type="entry name" value="Cyt_P450"/>
</dbReference>
<dbReference type="InterPro" id="IPR017972">
    <property type="entry name" value="Cyt_P450_CS"/>
</dbReference>
<dbReference type="InterPro" id="IPR002403">
    <property type="entry name" value="Cyt_P450_E_grp-IV"/>
</dbReference>
<dbReference type="InterPro" id="IPR036396">
    <property type="entry name" value="Cyt_P450_sf"/>
</dbReference>
<dbReference type="InterPro" id="IPR050196">
    <property type="entry name" value="Cytochrome_P450_Monoox"/>
</dbReference>
<dbReference type="InterPro" id="IPR054967">
    <property type="entry name" value="PentlenOxigase"/>
</dbReference>
<dbReference type="NCBIfam" id="NF045812">
    <property type="entry name" value="PentlenOxigase"/>
    <property type="match status" value="1"/>
</dbReference>
<dbReference type="PANTHER" id="PTHR24291:SF50">
    <property type="entry name" value="BIFUNCTIONAL ALBAFLAVENONE MONOOXYGENASE_TERPENE SYNTHASE"/>
    <property type="match status" value="1"/>
</dbReference>
<dbReference type="PANTHER" id="PTHR24291">
    <property type="entry name" value="CYTOCHROME P450 FAMILY 4"/>
    <property type="match status" value="1"/>
</dbReference>
<dbReference type="Pfam" id="PF00067">
    <property type="entry name" value="p450"/>
    <property type="match status" value="1"/>
</dbReference>
<dbReference type="PRINTS" id="PR00465">
    <property type="entry name" value="EP450IV"/>
</dbReference>
<dbReference type="PRINTS" id="PR00385">
    <property type="entry name" value="P450"/>
</dbReference>
<dbReference type="SUPFAM" id="SSF48264">
    <property type="entry name" value="Cytochrome P450"/>
    <property type="match status" value="1"/>
</dbReference>
<dbReference type="PROSITE" id="PS00086">
    <property type="entry name" value="CYTOCHROME_P450"/>
    <property type="match status" value="1"/>
</dbReference>
<evidence type="ECO:0000250" key="1"/>
<evidence type="ECO:0000255" key="2"/>
<evidence type="ECO:0000269" key="3">
    <source>
    </source>
</evidence>
<evidence type="ECO:0000269" key="4">
    <source>
    </source>
</evidence>
<evidence type="ECO:0000305" key="5"/>
<evidence type="ECO:0000305" key="6">
    <source>
    </source>
</evidence>